<evidence type="ECO:0000250" key="1">
    <source>
        <dbReference type="UniProtKB" id="P27918"/>
    </source>
</evidence>
<evidence type="ECO:0000255" key="2"/>
<evidence type="ECO:0000255" key="3">
    <source>
        <dbReference type="PROSITE-ProRule" id="PRU00210"/>
    </source>
</evidence>
<evidence type="ECO:0000269" key="4">
    <source>
    </source>
</evidence>
<evidence type="ECO:0000305" key="5"/>
<comment type="function">
    <text evidence="1 4">A positive regulator of the alternate pathway of complement (PubMed:28264884). It binds to and stabilizes the C3- and C5-convertase enzyme complexes (By similarity). Inhibits CFI-CFH mediated degradation of Inhibits CFI-CFH mediated degradation of Complement C3 beta chain (C3b) (By similarity).</text>
</comment>
<comment type="subunit">
    <text evidence="1 4">In plasma, properdin exists as dimers, trimers or tetramers in the relative proportions of 26:54:20 (By similarity). Interacts with the pro-C3-convertase enzyme complex (C3b-Bb) comprised of Complement C3 beta chain (C3b) and the Complement factor B Bb fragment (Bb), where it binds (via its TSP type-1 5 domain) with C3b and Bb (By similarity). This interaction stabilizes the complex and allows it to become the active C3-convertase enzyme complex (C3b-Bb-FP) (By similarity). Interacts with C3b (PubMed:28264884). Interacts with CFB (By similarity).</text>
</comment>
<comment type="subcellular location">
    <subcellularLocation>
        <location evidence="1">Secreted</location>
    </subcellularLocation>
</comment>
<comment type="domain">
    <text evidence="1">TSP type-1 domain 0 binds to TSP type-1 domain 4, and TSP type-1 domain 1 binds to TSP type-1 domain 6 (By similarity). These interactions mediate multimerization (By similarity).</text>
</comment>
<sequence length="464" mass="50327">MPAEMQAPQWLLLLLVILPATGSDPVLCFTQYEESSGRCKGLLGRDIRVEDCCLNAAYAFQEHDGGLCQACRSPQWSAWSLWGPCSVTCSEGSQLRHRRCVGRGGQCSENVAPGTLEWQLQACEDQPCCPEMGGWSEWGPWGPCSVTCSKGTQIRQRVCDNPAPKCGGHCPGEAQQSQACDTQKTCPTHGAWASWGPWSPCSGSCLGGAQEPKETRSRSCSAPAPSHQPPGKPCSGPAYEHKACSGLPPCPVAGGWGPWSPLSPCSVTCGLGQTLEQRTCDHPAPRHGGPFCAGDATRNQMCNKAVPCPVNGEWEAWGKWSDCSRLRMSINCEGTPGQQSRSRSCGGRKFNGKPCAGKLQDIRHCYNIHNCIMKGSWSQWSTWSLCTPPCSPNATRVRQRLCTPLLPKYPPTVSMVEGQGEKNVTFWGTPRPLCEALQGQKLVVEEKRSCLHVPVCKDPEEKKP</sequence>
<dbReference type="EMBL" id="AK150212">
    <property type="protein sequence ID" value="BAE29382.1"/>
    <property type="molecule type" value="mRNA"/>
</dbReference>
<dbReference type="EMBL" id="AK152782">
    <property type="protein sequence ID" value="BAE31492.1"/>
    <property type="molecule type" value="mRNA"/>
</dbReference>
<dbReference type="EMBL" id="AK159291">
    <property type="protein sequence ID" value="BAE34967.1"/>
    <property type="molecule type" value="mRNA"/>
</dbReference>
<dbReference type="EMBL" id="AK171374">
    <property type="protein sequence ID" value="BAE42416.1"/>
    <property type="molecule type" value="mRNA"/>
</dbReference>
<dbReference type="EMBL" id="X12905">
    <property type="protein sequence ID" value="CAA31389.1"/>
    <property type="molecule type" value="mRNA"/>
</dbReference>
<dbReference type="CCDS" id="CCDS30047.1"/>
<dbReference type="PIR" id="S05478">
    <property type="entry name" value="S05478"/>
</dbReference>
<dbReference type="RefSeq" id="NP_032849.2">
    <property type="nucleotide sequence ID" value="NM_008823.4"/>
</dbReference>
<dbReference type="SMR" id="P11680"/>
<dbReference type="BioGRID" id="202120">
    <property type="interactions" value="6"/>
</dbReference>
<dbReference type="ComplexPortal" id="CPX-5896">
    <property type="entry name" value="Alternative pathway pathogen cell-bound C3 convertase complex C3bBbP"/>
</dbReference>
<dbReference type="ComplexPortal" id="CPX-5897">
    <property type="entry name" value="Alternative pathway pathogen cell-bound C5 convertase complex C3bBbC3bP"/>
</dbReference>
<dbReference type="FunCoup" id="P11680">
    <property type="interactions" value="164"/>
</dbReference>
<dbReference type="IntAct" id="P11680">
    <property type="interactions" value="3"/>
</dbReference>
<dbReference type="STRING" id="10090.ENSMUSP00000001156"/>
<dbReference type="GlyCosmos" id="P11680">
    <property type="glycosylation" value="19 sites, No reported glycans"/>
</dbReference>
<dbReference type="GlyGen" id="P11680">
    <property type="glycosylation" value="20 sites"/>
</dbReference>
<dbReference type="iPTMnet" id="P11680"/>
<dbReference type="PhosphoSitePlus" id="P11680"/>
<dbReference type="SwissPalm" id="P11680"/>
<dbReference type="CPTAC" id="non-CPTAC-3605"/>
<dbReference type="jPOST" id="P11680"/>
<dbReference type="PaxDb" id="10090-ENSMUSP00000001156"/>
<dbReference type="PeptideAtlas" id="P11680"/>
<dbReference type="ProteomicsDB" id="291602"/>
<dbReference type="Antibodypedia" id="11427">
    <property type="antibodies" value="618 antibodies from 35 providers"/>
</dbReference>
<dbReference type="DNASU" id="18636"/>
<dbReference type="Ensembl" id="ENSMUST00000001156.8">
    <property type="protein sequence ID" value="ENSMUSP00000001156.8"/>
    <property type="gene ID" value="ENSMUSG00000001128.8"/>
</dbReference>
<dbReference type="GeneID" id="18636"/>
<dbReference type="KEGG" id="mmu:18636"/>
<dbReference type="UCSC" id="uc009sub.1">
    <property type="organism name" value="mouse"/>
</dbReference>
<dbReference type="AGR" id="MGI:97545"/>
<dbReference type="CTD" id="5199"/>
<dbReference type="MGI" id="MGI:97545">
    <property type="gene designation" value="Cfp"/>
</dbReference>
<dbReference type="VEuPathDB" id="HostDB:ENSMUSG00000001128"/>
<dbReference type="eggNOG" id="KOG4475">
    <property type="taxonomic scope" value="Eukaryota"/>
</dbReference>
<dbReference type="GeneTree" id="ENSGT00940000161209"/>
<dbReference type="HOGENOM" id="CLU_047129_0_0_1"/>
<dbReference type="InParanoid" id="P11680"/>
<dbReference type="OMA" id="CQACRSP"/>
<dbReference type="OrthoDB" id="446173at2759"/>
<dbReference type="PhylomeDB" id="P11680"/>
<dbReference type="TreeFam" id="TF315491"/>
<dbReference type="Reactome" id="R-MMU-173736">
    <property type="pathway name" value="Alternative complement activation"/>
</dbReference>
<dbReference type="Reactome" id="R-MMU-174577">
    <property type="pathway name" value="Activation of C3 and C5"/>
</dbReference>
<dbReference type="Reactome" id="R-MMU-5173214">
    <property type="pathway name" value="O-glycosylation of TSR domain-containing proteins"/>
</dbReference>
<dbReference type="Reactome" id="R-MMU-6798695">
    <property type="pathway name" value="Neutrophil degranulation"/>
</dbReference>
<dbReference type="Reactome" id="R-MMU-977606">
    <property type="pathway name" value="Regulation of Complement cascade"/>
</dbReference>
<dbReference type="BioGRID-ORCS" id="18636">
    <property type="hits" value="4 hits in 78 CRISPR screens"/>
</dbReference>
<dbReference type="ChiTaRS" id="Cfp">
    <property type="organism name" value="mouse"/>
</dbReference>
<dbReference type="PRO" id="PR:P11680"/>
<dbReference type="Proteomes" id="UP000000589">
    <property type="component" value="Chromosome X"/>
</dbReference>
<dbReference type="RNAct" id="P11680">
    <property type="molecule type" value="protein"/>
</dbReference>
<dbReference type="Bgee" id="ENSMUSG00000001128">
    <property type="expression patterns" value="Expressed in granulocyte and 142 other cell types or tissues"/>
</dbReference>
<dbReference type="ExpressionAtlas" id="P11680">
    <property type="expression patterns" value="baseline and differential"/>
</dbReference>
<dbReference type="GO" id="GO:0098548">
    <property type="term" value="C:cytoplasmic side of Golgi membrane"/>
    <property type="evidence" value="ECO:0000266"/>
    <property type="project" value="ComplexPortal"/>
</dbReference>
<dbReference type="GO" id="GO:0005615">
    <property type="term" value="C:extracellular space"/>
    <property type="evidence" value="ECO:0000314"/>
    <property type="project" value="MGI"/>
</dbReference>
<dbReference type="GO" id="GO:0030141">
    <property type="term" value="C:secretory granule"/>
    <property type="evidence" value="ECO:0000314"/>
    <property type="project" value="MGI"/>
</dbReference>
<dbReference type="GO" id="GO:0006956">
    <property type="term" value="P:complement activation"/>
    <property type="evidence" value="ECO:0000303"/>
    <property type="project" value="ComplexPortal"/>
</dbReference>
<dbReference type="GO" id="GO:0006957">
    <property type="term" value="P:complement activation, alternative pathway"/>
    <property type="evidence" value="ECO:0000315"/>
    <property type="project" value="MGI"/>
</dbReference>
<dbReference type="GO" id="GO:0050778">
    <property type="term" value="P:positive regulation of immune response"/>
    <property type="evidence" value="ECO:0000303"/>
    <property type="project" value="ComplexPortal"/>
</dbReference>
<dbReference type="GO" id="GO:1903028">
    <property type="term" value="P:positive regulation of opsonization"/>
    <property type="evidence" value="ECO:0000303"/>
    <property type="project" value="ComplexPortal"/>
</dbReference>
<dbReference type="FunFam" id="2.20.100.10:FF:000001">
    <property type="entry name" value="semaphorin-5A isoform X1"/>
    <property type="match status" value="3"/>
</dbReference>
<dbReference type="Gene3D" id="2.20.100.10">
    <property type="entry name" value="Thrombospondin type-1 (TSP1) repeat"/>
    <property type="match status" value="6"/>
</dbReference>
<dbReference type="InterPro" id="IPR049536">
    <property type="entry name" value="CFP_TSR-0"/>
</dbReference>
<dbReference type="InterPro" id="IPR054019">
    <property type="entry name" value="CFP_TSR_C"/>
</dbReference>
<dbReference type="InterPro" id="IPR052065">
    <property type="entry name" value="Compl_asym_regulator"/>
</dbReference>
<dbReference type="InterPro" id="IPR000884">
    <property type="entry name" value="TSP1_rpt"/>
</dbReference>
<dbReference type="InterPro" id="IPR036383">
    <property type="entry name" value="TSP1_rpt_sf"/>
</dbReference>
<dbReference type="PANTHER" id="PTHR22906">
    <property type="entry name" value="PROPERDIN"/>
    <property type="match status" value="1"/>
</dbReference>
<dbReference type="PANTHER" id="PTHR22906:SF43">
    <property type="entry name" value="PROPERDIN"/>
    <property type="match status" value="1"/>
</dbReference>
<dbReference type="Pfam" id="PF22195">
    <property type="entry name" value="TSP1_CFP_C"/>
    <property type="match status" value="1"/>
</dbReference>
<dbReference type="Pfam" id="PF00090">
    <property type="entry name" value="TSP_1"/>
    <property type="match status" value="5"/>
</dbReference>
<dbReference type="Pfam" id="PF18487">
    <property type="entry name" value="TSR"/>
    <property type="match status" value="1"/>
</dbReference>
<dbReference type="PRINTS" id="PR01705">
    <property type="entry name" value="TSP1REPEAT"/>
</dbReference>
<dbReference type="SMART" id="SM00209">
    <property type="entry name" value="TSP1"/>
    <property type="match status" value="6"/>
</dbReference>
<dbReference type="SUPFAM" id="SSF82895">
    <property type="entry name" value="TSP-1 type 1 repeat"/>
    <property type="match status" value="6"/>
</dbReference>
<dbReference type="PROSITE" id="PS50092">
    <property type="entry name" value="TSP1"/>
    <property type="match status" value="6"/>
</dbReference>
<keyword id="KW-0179">Complement alternate pathway</keyword>
<keyword id="KW-1015">Disulfide bond</keyword>
<keyword id="KW-0325">Glycoprotein</keyword>
<keyword id="KW-0391">Immunity</keyword>
<keyword id="KW-0399">Innate immunity</keyword>
<keyword id="KW-1185">Reference proteome</keyword>
<keyword id="KW-0677">Repeat</keyword>
<keyword id="KW-0964">Secreted</keyword>
<keyword id="KW-0732">Signal</keyword>
<gene>
    <name type="primary">Cfp</name>
    <name type="synonym">Pfc</name>
</gene>
<name>PROP_MOUSE</name>
<accession>P11680</accession>
<accession>Q3TB98</accession>
<accession>Q3U779</accession>
<protein>
    <recommendedName>
        <fullName>Properdin</fullName>
    </recommendedName>
    <alternativeName>
        <fullName>Complement factor P</fullName>
    </alternativeName>
</protein>
<proteinExistence type="evidence at protein level"/>
<reference key="1">
    <citation type="journal article" date="2005" name="Science">
        <title>The transcriptional landscape of the mammalian genome.</title>
        <authorList>
            <person name="Carninci P."/>
            <person name="Kasukawa T."/>
            <person name="Katayama S."/>
            <person name="Gough J."/>
            <person name="Frith M.C."/>
            <person name="Maeda N."/>
            <person name="Oyama R."/>
            <person name="Ravasi T."/>
            <person name="Lenhard B."/>
            <person name="Wells C."/>
            <person name="Kodzius R."/>
            <person name="Shimokawa K."/>
            <person name="Bajic V.B."/>
            <person name="Brenner S.E."/>
            <person name="Batalov S."/>
            <person name="Forrest A.R."/>
            <person name="Zavolan M."/>
            <person name="Davis M.J."/>
            <person name="Wilming L.G."/>
            <person name="Aidinis V."/>
            <person name="Allen J.E."/>
            <person name="Ambesi-Impiombato A."/>
            <person name="Apweiler R."/>
            <person name="Aturaliya R.N."/>
            <person name="Bailey T.L."/>
            <person name="Bansal M."/>
            <person name="Baxter L."/>
            <person name="Beisel K.W."/>
            <person name="Bersano T."/>
            <person name="Bono H."/>
            <person name="Chalk A.M."/>
            <person name="Chiu K.P."/>
            <person name="Choudhary V."/>
            <person name="Christoffels A."/>
            <person name="Clutterbuck D.R."/>
            <person name="Crowe M.L."/>
            <person name="Dalla E."/>
            <person name="Dalrymple B.P."/>
            <person name="de Bono B."/>
            <person name="Della Gatta G."/>
            <person name="di Bernardo D."/>
            <person name="Down T."/>
            <person name="Engstrom P."/>
            <person name="Fagiolini M."/>
            <person name="Faulkner G."/>
            <person name="Fletcher C.F."/>
            <person name="Fukushima T."/>
            <person name="Furuno M."/>
            <person name="Futaki S."/>
            <person name="Gariboldi M."/>
            <person name="Georgii-Hemming P."/>
            <person name="Gingeras T.R."/>
            <person name="Gojobori T."/>
            <person name="Green R.E."/>
            <person name="Gustincich S."/>
            <person name="Harbers M."/>
            <person name="Hayashi Y."/>
            <person name="Hensch T.K."/>
            <person name="Hirokawa N."/>
            <person name="Hill D."/>
            <person name="Huminiecki L."/>
            <person name="Iacono M."/>
            <person name="Ikeo K."/>
            <person name="Iwama A."/>
            <person name="Ishikawa T."/>
            <person name="Jakt M."/>
            <person name="Kanapin A."/>
            <person name="Katoh M."/>
            <person name="Kawasawa Y."/>
            <person name="Kelso J."/>
            <person name="Kitamura H."/>
            <person name="Kitano H."/>
            <person name="Kollias G."/>
            <person name="Krishnan S.P."/>
            <person name="Kruger A."/>
            <person name="Kummerfeld S.K."/>
            <person name="Kurochkin I.V."/>
            <person name="Lareau L.F."/>
            <person name="Lazarevic D."/>
            <person name="Lipovich L."/>
            <person name="Liu J."/>
            <person name="Liuni S."/>
            <person name="McWilliam S."/>
            <person name="Madan Babu M."/>
            <person name="Madera M."/>
            <person name="Marchionni L."/>
            <person name="Matsuda H."/>
            <person name="Matsuzawa S."/>
            <person name="Miki H."/>
            <person name="Mignone F."/>
            <person name="Miyake S."/>
            <person name="Morris K."/>
            <person name="Mottagui-Tabar S."/>
            <person name="Mulder N."/>
            <person name="Nakano N."/>
            <person name="Nakauchi H."/>
            <person name="Ng P."/>
            <person name="Nilsson R."/>
            <person name="Nishiguchi S."/>
            <person name="Nishikawa S."/>
            <person name="Nori F."/>
            <person name="Ohara O."/>
            <person name="Okazaki Y."/>
            <person name="Orlando V."/>
            <person name="Pang K.C."/>
            <person name="Pavan W.J."/>
            <person name="Pavesi G."/>
            <person name="Pesole G."/>
            <person name="Petrovsky N."/>
            <person name="Piazza S."/>
            <person name="Reed J."/>
            <person name="Reid J.F."/>
            <person name="Ring B.Z."/>
            <person name="Ringwald M."/>
            <person name="Rost B."/>
            <person name="Ruan Y."/>
            <person name="Salzberg S.L."/>
            <person name="Sandelin A."/>
            <person name="Schneider C."/>
            <person name="Schoenbach C."/>
            <person name="Sekiguchi K."/>
            <person name="Semple C.A."/>
            <person name="Seno S."/>
            <person name="Sessa L."/>
            <person name="Sheng Y."/>
            <person name="Shibata Y."/>
            <person name="Shimada H."/>
            <person name="Shimada K."/>
            <person name="Silva D."/>
            <person name="Sinclair B."/>
            <person name="Sperling S."/>
            <person name="Stupka E."/>
            <person name="Sugiura K."/>
            <person name="Sultana R."/>
            <person name="Takenaka Y."/>
            <person name="Taki K."/>
            <person name="Tammoja K."/>
            <person name="Tan S.L."/>
            <person name="Tang S."/>
            <person name="Taylor M.S."/>
            <person name="Tegner J."/>
            <person name="Teichmann S.A."/>
            <person name="Ueda H.R."/>
            <person name="van Nimwegen E."/>
            <person name="Verardo R."/>
            <person name="Wei C.L."/>
            <person name="Yagi K."/>
            <person name="Yamanishi H."/>
            <person name="Zabarovsky E."/>
            <person name="Zhu S."/>
            <person name="Zimmer A."/>
            <person name="Hide W."/>
            <person name="Bult C."/>
            <person name="Grimmond S.M."/>
            <person name="Teasdale R.D."/>
            <person name="Liu E.T."/>
            <person name="Brusic V."/>
            <person name="Quackenbush J."/>
            <person name="Wahlestedt C."/>
            <person name="Mattick J.S."/>
            <person name="Hume D.A."/>
            <person name="Kai C."/>
            <person name="Sasaki D."/>
            <person name="Tomaru Y."/>
            <person name="Fukuda S."/>
            <person name="Kanamori-Katayama M."/>
            <person name="Suzuki M."/>
            <person name="Aoki J."/>
            <person name="Arakawa T."/>
            <person name="Iida J."/>
            <person name="Imamura K."/>
            <person name="Itoh M."/>
            <person name="Kato T."/>
            <person name="Kawaji H."/>
            <person name="Kawagashira N."/>
            <person name="Kawashima T."/>
            <person name="Kojima M."/>
            <person name="Kondo S."/>
            <person name="Konno H."/>
            <person name="Nakano K."/>
            <person name="Ninomiya N."/>
            <person name="Nishio T."/>
            <person name="Okada M."/>
            <person name="Plessy C."/>
            <person name="Shibata K."/>
            <person name="Shiraki T."/>
            <person name="Suzuki S."/>
            <person name="Tagami M."/>
            <person name="Waki K."/>
            <person name="Watahiki A."/>
            <person name="Okamura-Oho Y."/>
            <person name="Suzuki H."/>
            <person name="Kawai J."/>
            <person name="Hayashizaki Y."/>
        </authorList>
    </citation>
    <scope>NUCLEOTIDE SEQUENCE [LARGE SCALE MRNA]</scope>
    <source>
        <strain>C57BL/6J</strain>
        <tissue>Bone marrow</tissue>
    </source>
</reference>
<reference key="2">
    <citation type="journal article" date="1988" name="Nature">
        <title>Properdin, the terminal complement components, thrombospondin and the circumsporozoite protein of malaria parasites contain similar sequence motifs.</title>
        <authorList>
            <person name="Goundis A."/>
            <person name="Reid K.B.M."/>
        </authorList>
    </citation>
    <scope>NUCLEOTIDE SEQUENCE [MRNA] OF 28-464</scope>
    <source>
        <tissue>Macrophage</tissue>
    </source>
</reference>
<reference key="3">
    <citation type="journal article" date="2017" name="EMBO J.">
        <title>Functional and structural insight into properdin control of complement alternative pathway amplification.</title>
        <authorList>
            <person name="Pedersen D.V."/>
            <person name="Roumenina L."/>
            <person name="Jensen R.K."/>
            <person name="Gadeberg T.A."/>
            <person name="Marinozzi C."/>
            <person name="Picard C."/>
            <person name="Rybkine T."/>
            <person name="Thiel S."/>
            <person name="Soerensen U.B."/>
            <person name="Stover C."/>
            <person name="Fremeaux-Bacchi V."/>
            <person name="Andersen G.R."/>
        </authorList>
    </citation>
    <scope>FUNCTION</scope>
    <scope>INTERACTION WITH C3</scope>
</reference>
<feature type="signal peptide" evidence="2">
    <location>
        <begin position="1"/>
        <end position="22"/>
    </location>
</feature>
<feature type="chain" id="PRO_0000043369" description="Properdin">
    <location>
        <begin position="23"/>
        <end position="464"/>
    </location>
</feature>
<feature type="domain" description="TSP type-1 0" evidence="3">
    <location>
        <begin position="24"/>
        <end position="72"/>
    </location>
</feature>
<feature type="domain" description="TSP type-1 1" evidence="3">
    <location>
        <begin position="73"/>
        <end position="130"/>
    </location>
</feature>
<feature type="domain" description="TSP type-1 2" evidence="3">
    <location>
        <begin position="132"/>
        <end position="187"/>
    </location>
</feature>
<feature type="domain" description="TSP type-1 3" evidence="3">
    <location>
        <begin position="189"/>
        <end position="251"/>
    </location>
</feature>
<feature type="domain" description="TSP type-1 4" evidence="3">
    <location>
        <begin position="253"/>
        <end position="309"/>
    </location>
</feature>
<feature type="domain" description="TSP type-1 5" evidence="3">
    <location>
        <begin position="311"/>
        <end position="372"/>
    </location>
</feature>
<feature type="domain" description="TSP type-1 6" evidence="3">
    <location>
        <begin position="374"/>
        <end position="457"/>
    </location>
</feature>
<feature type="region of interest" description="Interaction with Complement C3 beta chain" evidence="1">
    <location>
        <begin position="346"/>
        <end position="354"/>
    </location>
</feature>
<feature type="glycosylation site" description="C-linked (Man) tryptophan" evidence="1">
    <location>
        <position position="79"/>
    </location>
</feature>
<feature type="glycosylation site" description="C-linked (Man) tryptophan" evidence="1">
    <location>
        <position position="82"/>
    </location>
</feature>
<feature type="glycosylation site" description="C-linked (Man) tryptophan" evidence="1">
    <location>
        <position position="135"/>
    </location>
</feature>
<feature type="glycosylation site" description="C-linked (Man) tryptophan" evidence="1">
    <location>
        <position position="138"/>
    </location>
</feature>
<feature type="glycosylation site" description="C-linked (Man) tryptophan" evidence="1">
    <location>
        <position position="141"/>
    </location>
</feature>
<feature type="glycosylation site" description="O-linked (Fuc...) threonine" evidence="1">
    <location>
        <position position="147"/>
    </location>
</feature>
<feature type="glycosylation site" description="C-linked (Man) tryptophan" evidence="1">
    <location>
        <position position="192"/>
    </location>
</feature>
<feature type="glycosylation site" description="C-linked (Man) tryptophan" evidence="1">
    <location>
        <position position="195"/>
    </location>
</feature>
<feature type="glycosylation site" description="C-linked (Man) tryptophan" evidence="1">
    <location>
        <position position="198"/>
    </location>
</feature>
<feature type="glycosylation site" description="O-linked (Fuc...) serine" evidence="1">
    <location>
        <position position="204"/>
    </location>
</feature>
<feature type="glycosylation site" description="C-linked (Man) tryptophan" evidence="1">
    <location>
        <position position="256"/>
    </location>
</feature>
<feature type="glycosylation site" description="C-linked (Man) tryptophan" evidence="1">
    <location>
        <position position="259"/>
    </location>
</feature>
<feature type="glycosylation site" description="O-linked (Fuc...) threonine" evidence="1">
    <location>
        <position position="268"/>
    </location>
</feature>
<feature type="glycosylation site" description="C-linked (Man) tryptophan" evidence="1">
    <location>
        <position position="317"/>
    </location>
</feature>
<feature type="glycosylation site" description="C-linked (Man) tryptophan" evidence="1">
    <location>
        <position position="320"/>
    </location>
</feature>
<feature type="glycosylation site" description="C-linked (Man) tryptophan" evidence="1">
    <location>
        <position position="377"/>
    </location>
</feature>
<feature type="glycosylation site" description="C-linked (Man) tryptophan" evidence="1">
    <location>
        <position position="380"/>
    </location>
</feature>
<feature type="glycosylation site" description="C-linked (Man) tryptophan" evidence="1">
    <location>
        <position position="383"/>
    </location>
</feature>
<feature type="glycosylation site" description="N-linked (GlcNAc...) asparagine" evidence="2">
    <location>
        <position position="423"/>
    </location>
</feature>
<feature type="disulfide bond" evidence="1 3">
    <location>
        <begin position="28"/>
        <end position="52"/>
    </location>
</feature>
<feature type="disulfide bond" evidence="1 3">
    <location>
        <begin position="39"/>
        <end position="68"/>
    </location>
</feature>
<feature type="disulfide bond" evidence="1">
    <location>
        <begin position="53"/>
        <end position="71"/>
    </location>
</feature>
<feature type="disulfide bond" evidence="3">
    <location>
        <begin position="85"/>
        <end position="123"/>
    </location>
</feature>
<feature type="disulfide bond" evidence="3">
    <location>
        <begin position="89"/>
        <end position="129"/>
    </location>
</feature>
<feature type="disulfide bond" evidence="3">
    <location>
        <begin position="100"/>
        <end position="107"/>
    </location>
</feature>
<feature type="disulfide bond" evidence="1">
    <location>
        <begin position="128"/>
        <end position="166"/>
    </location>
</feature>
<feature type="disulfide bond" evidence="3">
    <location>
        <begin position="144"/>
        <end position="180"/>
    </location>
</feature>
<feature type="disulfide bond" evidence="3">
    <location>
        <begin position="148"/>
        <end position="186"/>
    </location>
</feature>
<feature type="disulfide bond" evidence="3">
    <location>
        <begin position="159"/>
        <end position="170"/>
    </location>
</feature>
<feature type="disulfide bond" evidence="3">
    <location>
        <begin position="201"/>
        <end position="244"/>
    </location>
</feature>
<feature type="disulfide bond" evidence="3">
    <location>
        <begin position="205"/>
        <end position="250"/>
    </location>
</feature>
<feature type="disulfide bond" evidence="3">
    <location>
        <begin position="220"/>
        <end position="234"/>
    </location>
</feature>
<feature type="disulfide bond" evidence="3">
    <location>
        <begin position="265"/>
        <end position="302"/>
    </location>
</feature>
<feature type="disulfide bond" evidence="3">
    <location>
        <begin position="269"/>
        <end position="308"/>
    </location>
</feature>
<feature type="disulfide bond" evidence="3">
    <location>
        <begin position="280"/>
        <end position="292"/>
    </location>
</feature>
<feature type="disulfide bond" evidence="3">
    <location>
        <begin position="323"/>
        <end position="365"/>
    </location>
</feature>
<feature type="disulfide bond" evidence="3">
    <location>
        <begin position="332"/>
        <end position="371"/>
    </location>
</feature>
<feature type="disulfide bond" evidence="3">
    <location>
        <begin position="345"/>
        <end position="355"/>
    </location>
</feature>
<feature type="disulfide bond" evidence="3">
    <location>
        <begin position="386"/>
        <end position="450"/>
    </location>
</feature>
<feature type="disulfide bond" evidence="3">
    <location>
        <begin position="390"/>
        <end position="456"/>
    </location>
</feature>
<feature type="disulfide bond" evidence="3">
    <location>
        <begin position="402"/>
        <end position="434"/>
    </location>
</feature>
<feature type="sequence conflict" description="In Ref. 1; BAE42416." evidence="5" ref="1">
    <original>Y</original>
    <variation>N</variation>
    <location>
        <position position="58"/>
    </location>
</feature>
<feature type="sequence conflict" description="In Ref. 2; CAA31389." evidence="5" ref="2">
    <original>C</original>
    <variation>R</variation>
    <location>
        <position position="201"/>
    </location>
</feature>
<feature type="sequence conflict" description="In Ref. 2; CAA31389." evidence="5" ref="2">
    <original>G</original>
    <variation>D</variation>
    <location>
        <position position="347"/>
    </location>
</feature>
<organism>
    <name type="scientific">Mus musculus</name>
    <name type="common">Mouse</name>
    <dbReference type="NCBI Taxonomy" id="10090"/>
    <lineage>
        <taxon>Eukaryota</taxon>
        <taxon>Metazoa</taxon>
        <taxon>Chordata</taxon>
        <taxon>Craniata</taxon>
        <taxon>Vertebrata</taxon>
        <taxon>Euteleostomi</taxon>
        <taxon>Mammalia</taxon>
        <taxon>Eutheria</taxon>
        <taxon>Euarchontoglires</taxon>
        <taxon>Glires</taxon>
        <taxon>Rodentia</taxon>
        <taxon>Myomorpha</taxon>
        <taxon>Muroidea</taxon>
        <taxon>Muridae</taxon>
        <taxon>Murinae</taxon>
        <taxon>Mus</taxon>
        <taxon>Mus</taxon>
    </lineage>
</organism>